<feature type="chain" id="PRO_0000182938" description="Deoxyuridine 5'-triphosphate nucleotidohydrolase">
    <location>
        <begin position="1"/>
        <end position="169"/>
    </location>
</feature>
<feature type="region of interest" description="Disordered" evidence="2">
    <location>
        <begin position="1"/>
        <end position="25"/>
    </location>
</feature>
<feature type="compositionally biased region" description="Polar residues" evidence="2">
    <location>
        <begin position="1"/>
        <end position="10"/>
    </location>
</feature>
<feature type="binding site" evidence="1">
    <location>
        <begin position="91"/>
        <end position="93"/>
    </location>
    <ligand>
        <name>substrate</name>
    </ligand>
</feature>
<feature type="binding site" evidence="1">
    <location>
        <begin position="105"/>
        <end position="108"/>
    </location>
    <ligand>
        <name>substrate</name>
    </ligand>
</feature>
<feature type="binding site" evidence="1">
    <location>
        <position position="116"/>
    </location>
    <ligand>
        <name>substrate</name>
    </ligand>
</feature>
<feature type="binding site" evidence="1">
    <location>
        <position position="159"/>
    </location>
    <ligand>
        <name>substrate</name>
    </ligand>
</feature>
<feature type="binding site" evidence="1">
    <location>
        <begin position="164"/>
        <end position="165"/>
    </location>
    <ligand>
        <name>substrate</name>
    </ligand>
</feature>
<evidence type="ECO:0000250" key="1"/>
<evidence type="ECO:0000256" key="2">
    <source>
        <dbReference type="SAM" id="MobiDB-lite"/>
    </source>
</evidence>
<evidence type="ECO:0000305" key="3"/>
<proteinExistence type="evidence at transcript level"/>
<comment type="function">
    <text>This enzyme is involved in nucleotide metabolism: it produces dUMP, the immediate precursor of thymidine nucleotides and it decreases the intracellular concentration of dUTP so that uracil cannot be incorporated into DNA. It may have as well a metabolic role in merismatic cells.</text>
</comment>
<comment type="catalytic activity">
    <reaction>
        <text>dUTP + H2O = dUMP + diphosphate + H(+)</text>
        <dbReference type="Rhea" id="RHEA:10248"/>
        <dbReference type="ChEBI" id="CHEBI:15377"/>
        <dbReference type="ChEBI" id="CHEBI:15378"/>
        <dbReference type="ChEBI" id="CHEBI:33019"/>
        <dbReference type="ChEBI" id="CHEBI:61555"/>
        <dbReference type="ChEBI" id="CHEBI:246422"/>
        <dbReference type="EC" id="3.6.1.23"/>
    </reaction>
</comment>
<comment type="cofactor">
    <cofactor evidence="1">
        <name>Mg(2+)</name>
        <dbReference type="ChEBI" id="CHEBI:18420"/>
    </cofactor>
</comment>
<comment type="pathway">
    <text>Pyrimidine metabolism; dUMP biosynthesis; dUMP from dCTP (dUTP route): step 2/2.</text>
</comment>
<comment type="subunit">
    <text>Homodimer.</text>
</comment>
<comment type="tissue specificity">
    <text>Vegetative and floral merismatic cells and provascular and vascular merismatic derivatives.</text>
</comment>
<comment type="similarity">
    <text evidence="3">Belongs to the dUTPase family.</text>
</comment>
<name>DUT_SOLLC</name>
<sequence>MAENQINSPEITEPSPKVQKLDHPENGNVPFFRVKKLSENAVLPSRASSLAAGYDLSSAAETKVPARGKALVPTDLSIAVPQGTYARIAPRSGLAWKYSIDVGAGVIDADYRGPVGVVLFNHSEVDFEVKVGDRIAQLIVQKIVTPEVEQVDDLDSTVRGSGGFGSTGV</sequence>
<organism>
    <name type="scientific">Solanum lycopersicum</name>
    <name type="common">Tomato</name>
    <name type="synonym">Lycopersicon esculentum</name>
    <dbReference type="NCBI Taxonomy" id="4081"/>
    <lineage>
        <taxon>Eukaryota</taxon>
        <taxon>Viridiplantae</taxon>
        <taxon>Streptophyta</taxon>
        <taxon>Embryophyta</taxon>
        <taxon>Tracheophyta</taxon>
        <taxon>Spermatophyta</taxon>
        <taxon>Magnoliopsida</taxon>
        <taxon>eudicotyledons</taxon>
        <taxon>Gunneridae</taxon>
        <taxon>Pentapetalae</taxon>
        <taxon>asterids</taxon>
        <taxon>lamiids</taxon>
        <taxon>Solanales</taxon>
        <taxon>Solanaceae</taxon>
        <taxon>Solanoideae</taxon>
        <taxon>Solaneae</taxon>
        <taxon>Solanum</taxon>
        <taxon>Solanum subgen. Lycopersicon</taxon>
    </lineage>
</organism>
<protein>
    <recommendedName>
        <fullName>Deoxyuridine 5'-triphosphate nucleotidohydrolase</fullName>
        <shortName>dUTPase</shortName>
        <ecNumber>3.6.1.23</ecNumber>
    </recommendedName>
    <alternativeName>
        <fullName>P18</fullName>
    </alternativeName>
    <alternativeName>
        <fullName>dUTP pyrophosphatase</fullName>
    </alternativeName>
</protein>
<keyword id="KW-0378">Hydrolase</keyword>
<keyword id="KW-0460">Magnesium</keyword>
<keyword id="KW-0479">Metal-binding</keyword>
<keyword id="KW-0546">Nucleotide metabolism</keyword>
<keyword id="KW-1185">Reference proteome</keyword>
<reference key="1">
    <citation type="journal article" date="1992" name="Plant Cell">
        <title>A meristem-related gene from tomato encodes a dUTPase: analysis of expression in vegetative and floral meristems.</title>
        <authorList>
            <person name="Pri-Hadash A."/>
            <person name="Hareven D."/>
            <person name="Lifschitz E."/>
        </authorList>
    </citation>
    <scope>NUCLEOTIDE SEQUENCE [MRNA]</scope>
    <source>
        <strain>cv. Tiny Tim LA154</strain>
        <tissue>Meristem</tissue>
    </source>
</reference>
<accession>P32518</accession>
<dbReference type="EC" id="3.6.1.23"/>
<dbReference type="EMBL" id="S40549">
    <property type="protein sequence ID" value="AAB22611.1"/>
    <property type="molecule type" value="mRNA"/>
</dbReference>
<dbReference type="PIR" id="JQ1599">
    <property type="entry name" value="JQ1599"/>
</dbReference>
<dbReference type="RefSeq" id="NP_001233870.1">
    <property type="nucleotide sequence ID" value="NM_001246941.2"/>
</dbReference>
<dbReference type="SMR" id="P32518"/>
<dbReference type="FunCoup" id="P32518">
    <property type="interactions" value="2595"/>
</dbReference>
<dbReference type="STRING" id="4081.P32518"/>
<dbReference type="PaxDb" id="4081-Solyc01g100030.2.1"/>
<dbReference type="GeneID" id="544274"/>
<dbReference type="KEGG" id="sly:544274"/>
<dbReference type="eggNOG" id="KOG3370">
    <property type="taxonomic scope" value="Eukaryota"/>
</dbReference>
<dbReference type="InParanoid" id="P32518"/>
<dbReference type="OrthoDB" id="10261072at2759"/>
<dbReference type="UniPathway" id="UPA00610">
    <property type="reaction ID" value="UER00666"/>
</dbReference>
<dbReference type="Proteomes" id="UP000004994">
    <property type="component" value="Unplaced"/>
</dbReference>
<dbReference type="ExpressionAtlas" id="P32518">
    <property type="expression patterns" value="baseline and differential"/>
</dbReference>
<dbReference type="GO" id="GO:0004170">
    <property type="term" value="F:dUTP diphosphatase activity"/>
    <property type="evidence" value="ECO:0000318"/>
    <property type="project" value="GO_Central"/>
</dbReference>
<dbReference type="GO" id="GO:0000287">
    <property type="term" value="F:magnesium ion binding"/>
    <property type="evidence" value="ECO:0000318"/>
    <property type="project" value="GO_Central"/>
</dbReference>
<dbReference type="GO" id="GO:0006226">
    <property type="term" value="P:dUMP biosynthetic process"/>
    <property type="evidence" value="ECO:0000318"/>
    <property type="project" value="GO_Central"/>
</dbReference>
<dbReference type="GO" id="GO:0046081">
    <property type="term" value="P:dUTP catabolic process"/>
    <property type="evidence" value="ECO:0000318"/>
    <property type="project" value="GO_Central"/>
</dbReference>
<dbReference type="CDD" id="cd07557">
    <property type="entry name" value="trimeric_dUTPase"/>
    <property type="match status" value="1"/>
</dbReference>
<dbReference type="FunFam" id="2.70.40.10:FF:000004">
    <property type="entry name" value="Deoxyuridine triphosphatase"/>
    <property type="match status" value="1"/>
</dbReference>
<dbReference type="Gene3D" id="2.70.40.10">
    <property type="match status" value="1"/>
</dbReference>
<dbReference type="InterPro" id="IPR008181">
    <property type="entry name" value="dUTPase"/>
</dbReference>
<dbReference type="InterPro" id="IPR029054">
    <property type="entry name" value="dUTPase-like"/>
</dbReference>
<dbReference type="InterPro" id="IPR036157">
    <property type="entry name" value="dUTPase-like_sf"/>
</dbReference>
<dbReference type="InterPro" id="IPR033704">
    <property type="entry name" value="dUTPase_trimeric"/>
</dbReference>
<dbReference type="NCBIfam" id="TIGR00576">
    <property type="entry name" value="dut"/>
    <property type="match status" value="1"/>
</dbReference>
<dbReference type="NCBIfam" id="NF001862">
    <property type="entry name" value="PRK00601.1"/>
    <property type="match status" value="1"/>
</dbReference>
<dbReference type="PANTHER" id="PTHR11241">
    <property type="entry name" value="DEOXYURIDINE 5'-TRIPHOSPHATE NUCLEOTIDOHYDROLASE"/>
    <property type="match status" value="1"/>
</dbReference>
<dbReference type="PANTHER" id="PTHR11241:SF0">
    <property type="entry name" value="DEOXYURIDINE 5'-TRIPHOSPHATE NUCLEOTIDOHYDROLASE"/>
    <property type="match status" value="1"/>
</dbReference>
<dbReference type="Pfam" id="PF00692">
    <property type="entry name" value="dUTPase"/>
    <property type="match status" value="1"/>
</dbReference>
<dbReference type="SUPFAM" id="SSF51283">
    <property type="entry name" value="dUTPase-like"/>
    <property type="match status" value="1"/>
</dbReference>